<gene>
    <name evidence="1" type="primary">pepQ</name>
    <name type="ordered locus">Ecok1_38300</name>
    <name type="ORF">APECO1_2610</name>
</gene>
<name>PEPQ_ECOK1</name>
<accession>A1AI34</accession>
<organism>
    <name type="scientific">Escherichia coli O1:K1 / APEC</name>
    <dbReference type="NCBI Taxonomy" id="405955"/>
    <lineage>
        <taxon>Bacteria</taxon>
        <taxon>Pseudomonadati</taxon>
        <taxon>Pseudomonadota</taxon>
        <taxon>Gammaproteobacteria</taxon>
        <taxon>Enterobacterales</taxon>
        <taxon>Enterobacteriaceae</taxon>
        <taxon>Escherichia</taxon>
    </lineage>
</organism>
<proteinExistence type="inferred from homology"/>
<dbReference type="EC" id="3.4.13.9" evidence="1"/>
<dbReference type="EMBL" id="CP000468">
    <property type="protein sequence ID" value="ABJ03324.1"/>
    <property type="molecule type" value="Genomic_DNA"/>
</dbReference>
<dbReference type="RefSeq" id="WP_000444545.1">
    <property type="nucleotide sequence ID" value="NZ_CADILS010000045.1"/>
</dbReference>
<dbReference type="SMR" id="A1AI34"/>
<dbReference type="MEROPS" id="M24.003"/>
<dbReference type="KEGG" id="ecv:APECO1_2610"/>
<dbReference type="HOGENOM" id="CLU_050675_0_0_6"/>
<dbReference type="Proteomes" id="UP000008216">
    <property type="component" value="Chromosome"/>
</dbReference>
<dbReference type="GO" id="GO:0005829">
    <property type="term" value="C:cytosol"/>
    <property type="evidence" value="ECO:0007669"/>
    <property type="project" value="TreeGrafter"/>
</dbReference>
<dbReference type="GO" id="GO:0004177">
    <property type="term" value="F:aminopeptidase activity"/>
    <property type="evidence" value="ECO:0007669"/>
    <property type="project" value="TreeGrafter"/>
</dbReference>
<dbReference type="GO" id="GO:0046872">
    <property type="term" value="F:metal ion binding"/>
    <property type="evidence" value="ECO:0007669"/>
    <property type="project" value="UniProtKB-KW"/>
</dbReference>
<dbReference type="GO" id="GO:0008235">
    <property type="term" value="F:metalloexopeptidase activity"/>
    <property type="evidence" value="ECO:0007669"/>
    <property type="project" value="UniProtKB-UniRule"/>
</dbReference>
<dbReference type="GO" id="GO:0016795">
    <property type="term" value="F:phosphoric triester hydrolase activity"/>
    <property type="evidence" value="ECO:0007669"/>
    <property type="project" value="InterPro"/>
</dbReference>
<dbReference type="GO" id="GO:0102009">
    <property type="term" value="F:proline dipeptidase activity"/>
    <property type="evidence" value="ECO:0007669"/>
    <property type="project" value="UniProtKB-EC"/>
</dbReference>
<dbReference type="GO" id="GO:0006508">
    <property type="term" value="P:proteolysis"/>
    <property type="evidence" value="ECO:0007669"/>
    <property type="project" value="UniProtKB-KW"/>
</dbReference>
<dbReference type="CDD" id="cd01087">
    <property type="entry name" value="Prolidase"/>
    <property type="match status" value="1"/>
</dbReference>
<dbReference type="FunFam" id="3.40.350.10:FF:000002">
    <property type="entry name" value="Xaa-Pro dipeptidase"/>
    <property type="match status" value="1"/>
</dbReference>
<dbReference type="FunFam" id="3.90.230.10:FF:000006">
    <property type="entry name" value="Xaa-Pro dipeptidase"/>
    <property type="match status" value="1"/>
</dbReference>
<dbReference type="Gene3D" id="3.90.230.10">
    <property type="entry name" value="Creatinase/methionine aminopeptidase superfamily"/>
    <property type="match status" value="1"/>
</dbReference>
<dbReference type="Gene3D" id="3.40.350.10">
    <property type="entry name" value="Creatinase/prolidase N-terminal domain"/>
    <property type="match status" value="1"/>
</dbReference>
<dbReference type="HAMAP" id="MF_01279">
    <property type="entry name" value="X_Pro_dipeptid"/>
    <property type="match status" value="1"/>
</dbReference>
<dbReference type="InterPro" id="IPR029149">
    <property type="entry name" value="Creatin/AminoP/Spt16_N"/>
</dbReference>
<dbReference type="InterPro" id="IPR036005">
    <property type="entry name" value="Creatinase/aminopeptidase-like"/>
</dbReference>
<dbReference type="InterPro" id="IPR048819">
    <property type="entry name" value="PepQ_N"/>
</dbReference>
<dbReference type="InterPro" id="IPR000994">
    <property type="entry name" value="Pept_M24"/>
</dbReference>
<dbReference type="InterPro" id="IPR001131">
    <property type="entry name" value="Peptidase_M24B_aminopep-P_CS"/>
</dbReference>
<dbReference type="InterPro" id="IPR052433">
    <property type="entry name" value="X-Pro_dipept-like"/>
</dbReference>
<dbReference type="InterPro" id="IPR022846">
    <property type="entry name" value="X_Pro_dipept"/>
</dbReference>
<dbReference type="NCBIfam" id="NF010133">
    <property type="entry name" value="PRK13607.1"/>
    <property type="match status" value="1"/>
</dbReference>
<dbReference type="PANTHER" id="PTHR43226">
    <property type="entry name" value="XAA-PRO AMINOPEPTIDASE 3"/>
    <property type="match status" value="1"/>
</dbReference>
<dbReference type="PANTHER" id="PTHR43226:SF8">
    <property type="entry name" value="XAA-PRO DIPEPTIDASE"/>
    <property type="match status" value="1"/>
</dbReference>
<dbReference type="Pfam" id="PF21216">
    <property type="entry name" value="PepQ_N"/>
    <property type="match status" value="1"/>
</dbReference>
<dbReference type="Pfam" id="PF00557">
    <property type="entry name" value="Peptidase_M24"/>
    <property type="match status" value="1"/>
</dbReference>
<dbReference type="SUPFAM" id="SSF55920">
    <property type="entry name" value="Creatinase/aminopeptidase"/>
    <property type="match status" value="1"/>
</dbReference>
<dbReference type="PROSITE" id="PS00491">
    <property type="entry name" value="PROLINE_PEPTIDASE"/>
    <property type="match status" value="1"/>
</dbReference>
<comment type="function">
    <text evidence="1">Splits dipeptides with a prolyl residue in the C-terminal position.</text>
</comment>
<comment type="catalytic activity">
    <reaction evidence="1">
        <text>Xaa-L-Pro dipeptide + H2O = an L-alpha-amino acid + L-proline</text>
        <dbReference type="Rhea" id="RHEA:76407"/>
        <dbReference type="ChEBI" id="CHEBI:15377"/>
        <dbReference type="ChEBI" id="CHEBI:59869"/>
        <dbReference type="ChEBI" id="CHEBI:60039"/>
        <dbReference type="ChEBI" id="CHEBI:195196"/>
        <dbReference type="EC" id="3.4.13.9"/>
    </reaction>
</comment>
<comment type="cofactor">
    <cofactor evidence="1">
        <name>Mn(2+)</name>
        <dbReference type="ChEBI" id="CHEBI:29035"/>
    </cofactor>
    <text evidence="1">Binds 2 manganese ions per subunit.</text>
</comment>
<comment type="similarity">
    <text evidence="1">Belongs to the peptidase M24B family. Bacterial-type prolidase subfamily.</text>
</comment>
<evidence type="ECO:0000255" key="1">
    <source>
        <dbReference type="HAMAP-Rule" id="MF_01279"/>
    </source>
</evidence>
<feature type="chain" id="PRO_0000303843" description="Xaa-Pro dipeptidase">
    <location>
        <begin position="1"/>
        <end position="443"/>
    </location>
</feature>
<feature type="binding site" evidence="1">
    <location>
        <position position="246"/>
    </location>
    <ligand>
        <name>Mn(2+)</name>
        <dbReference type="ChEBI" id="CHEBI:29035"/>
        <label>2</label>
    </ligand>
</feature>
<feature type="binding site" evidence="1">
    <location>
        <position position="257"/>
    </location>
    <ligand>
        <name>Mn(2+)</name>
        <dbReference type="ChEBI" id="CHEBI:29035"/>
        <label>1</label>
    </ligand>
</feature>
<feature type="binding site" evidence="1">
    <location>
        <position position="257"/>
    </location>
    <ligand>
        <name>Mn(2+)</name>
        <dbReference type="ChEBI" id="CHEBI:29035"/>
        <label>2</label>
    </ligand>
</feature>
<feature type="binding site" evidence="1">
    <location>
        <position position="339"/>
    </location>
    <ligand>
        <name>Mn(2+)</name>
        <dbReference type="ChEBI" id="CHEBI:29035"/>
        <label>1</label>
    </ligand>
</feature>
<feature type="binding site" evidence="1">
    <location>
        <position position="384"/>
    </location>
    <ligand>
        <name>Mn(2+)</name>
        <dbReference type="ChEBI" id="CHEBI:29035"/>
        <label>1</label>
    </ligand>
</feature>
<feature type="binding site" evidence="1">
    <location>
        <position position="423"/>
    </location>
    <ligand>
        <name>Mn(2+)</name>
        <dbReference type="ChEBI" id="CHEBI:29035"/>
        <label>1</label>
    </ligand>
</feature>
<feature type="binding site" evidence="1">
    <location>
        <position position="423"/>
    </location>
    <ligand>
        <name>Mn(2+)</name>
        <dbReference type="ChEBI" id="CHEBI:29035"/>
        <label>2</label>
    </ligand>
</feature>
<sequence>MESLASLYKNHIATLQERTRDALARFKLDALLIHSGELFNVFLDDHPYPFKVNPQFKAWVPVTQVPNCWLLVDGVNKPKLWFYLPVDYWHNVEPLPNSFWTEDVEVIALPKADGIGSLLPAARGNIGYIGPVPERALQLGIEASNINPKGVIDYLHYYRSFKTEYELACMREAQKMAVNGHRAAEEAFRSGMSEFDINIAYLTATGHRDTDVPYSNIVALNEHAAVLHYTKLDHQAPEEMRSFLLDAGAEYNGYAADLTRTWSAKSDNDYAQLVKDVNDEQLALIATMKAGVSYVDYHIQFHQRIAKLLRKHQIITDMSEEAMVENDLTGPFMPHGIGHPLGLQVHDVAGFMQDDSGTHLAAPAKYPYLRCTRILQPGMVLTIEPGIYFIESLLAPWREGQFSKHFNWQKIEALKPFGGIRIEDNVVIHENNVENMTRDLKLA</sequence>
<reference key="1">
    <citation type="journal article" date="2007" name="J. Bacteriol.">
        <title>The genome sequence of avian pathogenic Escherichia coli strain O1:K1:H7 shares strong similarities with human extraintestinal pathogenic E. coli genomes.</title>
        <authorList>
            <person name="Johnson T.J."/>
            <person name="Kariyawasam S."/>
            <person name="Wannemuehler Y."/>
            <person name="Mangiamele P."/>
            <person name="Johnson S.J."/>
            <person name="Doetkott C."/>
            <person name="Skyberg J.A."/>
            <person name="Lynne A.M."/>
            <person name="Johnson J.R."/>
            <person name="Nolan L.K."/>
        </authorList>
    </citation>
    <scope>NUCLEOTIDE SEQUENCE [LARGE SCALE GENOMIC DNA]</scope>
</reference>
<protein>
    <recommendedName>
        <fullName evidence="1">Xaa-Pro dipeptidase</fullName>
        <shortName evidence="1">X-Pro dipeptidase</shortName>
        <ecNumber evidence="1">3.4.13.9</ecNumber>
    </recommendedName>
    <alternativeName>
        <fullName evidence="1">Imidodipeptidase</fullName>
    </alternativeName>
    <alternativeName>
        <fullName evidence="1">Proline dipeptidase</fullName>
        <shortName evidence="1">Prolidase</shortName>
    </alternativeName>
</protein>
<keyword id="KW-0224">Dipeptidase</keyword>
<keyword id="KW-0378">Hydrolase</keyword>
<keyword id="KW-0464">Manganese</keyword>
<keyword id="KW-0479">Metal-binding</keyword>
<keyword id="KW-0482">Metalloprotease</keyword>
<keyword id="KW-0645">Protease</keyword>
<keyword id="KW-1185">Reference proteome</keyword>